<proteinExistence type="inferred from homology"/>
<feature type="chain" id="PRO_0000155278" description="Thymidylate kinase">
    <location>
        <begin position="1"/>
        <end position="213"/>
    </location>
</feature>
<feature type="binding site" evidence="1">
    <location>
        <begin position="9"/>
        <end position="16"/>
    </location>
    <ligand>
        <name>ATP</name>
        <dbReference type="ChEBI" id="CHEBI:30616"/>
    </ligand>
</feature>
<organism>
    <name type="scientific">Geobacter sulfurreducens (strain ATCC 51573 / DSM 12127 / PCA)</name>
    <dbReference type="NCBI Taxonomy" id="243231"/>
    <lineage>
        <taxon>Bacteria</taxon>
        <taxon>Pseudomonadati</taxon>
        <taxon>Thermodesulfobacteriota</taxon>
        <taxon>Desulfuromonadia</taxon>
        <taxon>Geobacterales</taxon>
        <taxon>Geobacteraceae</taxon>
        <taxon>Geobacter</taxon>
    </lineage>
</organism>
<dbReference type="EC" id="2.7.4.9" evidence="1"/>
<dbReference type="EMBL" id="AE017180">
    <property type="protein sequence ID" value="AAR35605.1"/>
    <property type="molecule type" value="Genomic_DNA"/>
</dbReference>
<dbReference type="RefSeq" id="NP_953278.1">
    <property type="nucleotide sequence ID" value="NC_002939.5"/>
</dbReference>
<dbReference type="RefSeq" id="WP_010942869.1">
    <property type="nucleotide sequence ID" value="NC_002939.5"/>
</dbReference>
<dbReference type="SMR" id="Q74AX0"/>
<dbReference type="FunCoup" id="Q74AX0">
    <property type="interactions" value="507"/>
</dbReference>
<dbReference type="STRING" id="243231.GSU2229"/>
<dbReference type="EnsemblBacteria" id="AAR35605">
    <property type="protein sequence ID" value="AAR35605"/>
    <property type="gene ID" value="GSU2229"/>
</dbReference>
<dbReference type="KEGG" id="gsu:GSU2229"/>
<dbReference type="PATRIC" id="fig|243231.5.peg.2260"/>
<dbReference type="eggNOG" id="COG0125">
    <property type="taxonomic scope" value="Bacteria"/>
</dbReference>
<dbReference type="HOGENOM" id="CLU_049131_0_2_7"/>
<dbReference type="InParanoid" id="Q74AX0"/>
<dbReference type="OrthoDB" id="9774907at2"/>
<dbReference type="Proteomes" id="UP000000577">
    <property type="component" value="Chromosome"/>
</dbReference>
<dbReference type="GO" id="GO:0005737">
    <property type="term" value="C:cytoplasm"/>
    <property type="evidence" value="ECO:0000318"/>
    <property type="project" value="GO_Central"/>
</dbReference>
<dbReference type="GO" id="GO:0005829">
    <property type="term" value="C:cytosol"/>
    <property type="evidence" value="ECO:0000318"/>
    <property type="project" value="GO_Central"/>
</dbReference>
<dbReference type="GO" id="GO:0005524">
    <property type="term" value="F:ATP binding"/>
    <property type="evidence" value="ECO:0007669"/>
    <property type="project" value="UniProtKB-UniRule"/>
</dbReference>
<dbReference type="GO" id="GO:0004798">
    <property type="term" value="F:dTMP kinase activity"/>
    <property type="evidence" value="ECO:0000318"/>
    <property type="project" value="GO_Central"/>
</dbReference>
<dbReference type="GO" id="GO:0006233">
    <property type="term" value="P:dTDP biosynthetic process"/>
    <property type="evidence" value="ECO:0000318"/>
    <property type="project" value="GO_Central"/>
</dbReference>
<dbReference type="GO" id="GO:0006235">
    <property type="term" value="P:dTTP biosynthetic process"/>
    <property type="evidence" value="ECO:0000318"/>
    <property type="project" value="GO_Central"/>
</dbReference>
<dbReference type="GO" id="GO:0006227">
    <property type="term" value="P:dUDP biosynthetic process"/>
    <property type="evidence" value="ECO:0000318"/>
    <property type="project" value="GO_Central"/>
</dbReference>
<dbReference type="CDD" id="cd01672">
    <property type="entry name" value="TMPK"/>
    <property type="match status" value="1"/>
</dbReference>
<dbReference type="FunFam" id="3.40.50.300:FF:000225">
    <property type="entry name" value="Thymidylate kinase"/>
    <property type="match status" value="1"/>
</dbReference>
<dbReference type="Gene3D" id="3.40.50.300">
    <property type="entry name" value="P-loop containing nucleotide triphosphate hydrolases"/>
    <property type="match status" value="1"/>
</dbReference>
<dbReference type="HAMAP" id="MF_00165">
    <property type="entry name" value="Thymidylate_kinase"/>
    <property type="match status" value="1"/>
</dbReference>
<dbReference type="InterPro" id="IPR027417">
    <property type="entry name" value="P-loop_NTPase"/>
</dbReference>
<dbReference type="InterPro" id="IPR039430">
    <property type="entry name" value="Thymidylate_kin-like_dom"/>
</dbReference>
<dbReference type="InterPro" id="IPR018095">
    <property type="entry name" value="Thymidylate_kin_CS"/>
</dbReference>
<dbReference type="InterPro" id="IPR018094">
    <property type="entry name" value="Thymidylate_kinase"/>
</dbReference>
<dbReference type="NCBIfam" id="TIGR00041">
    <property type="entry name" value="DTMP_kinase"/>
    <property type="match status" value="1"/>
</dbReference>
<dbReference type="PANTHER" id="PTHR10344">
    <property type="entry name" value="THYMIDYLATE KINASE"/>
    <property type="match status" value="1"/>
</dbReference>
<dbReference type="PANTHER" id="PTHR10344:SF4">
    <property type="entry name" value="UMP-CMP KINASE 2, MITOCHONDRIAL"/>
    <property type="match status" value="1"/>
</dbReference>
<dbReference type="Pfam" id="PF02223">
    <property type="entry name" value="Thymidylate_kin"/>
    <property type="match status" value="1"/>
</dbReference>
<dbReference type="SUPFAM" id="SSF52540">
    <property type="entry name" value="P-loop containing nucleoside triphosphate hydrolases"/>
    <property type="match status" value="1"/>
</dbReference>
<dbReference type="PROSITE" id="PS01331">
    <property type="entry name" value="THYMIDYLATE_KINASE"/>
    <property type="match status" value="1"/>
</dbReference>
<name>KTHY_GEOSL</name>
<accession>Q74AX0</accession>
<gene>
    <name evidence="1" type="primary">tmk</name>
    <name type="ordered locus">GSU2229</name>
</gene>
<sequence>MGYFITFEGIEGCGKTTQIKRAAQSLREAGHRVVVTREPGGCPIADDIRAILLDAGNSAMVPTTELLLYAAARAQHVAEVIAPALAEGAVVLCDRFTDSTLVYQGFGRNLDRDLIARLNTLAAGQIRPDLTILLDCPVAVGLARAAARINSRQTNREERFERESLLFHERVREGFLSLAGGEPHRFAVIDGNDGVEATATAVADVLLNRVPRR</sequence>
<comment type="function">
    <text evidence="1">Phosphorylation of dTMP to form dTDP in both de novo and salvage pathways of dTTP synthesis.</text>
</comment>
<comment type="catalytic activity">
    <reaction evidence="1">
        <text>dTMP + ATP = dTDP + ADP</text>
        <dbReference type="Rhea" id="RHEA:13517"/>
        <dbReference type="ChEBI" id="CHEBI:30616"/>
        <dbReference type="ChEBI" id="CHEBI:58369"/>
        <dbReference type="ChEBI" id="CHEBI:63528"/>
        <dbReference type="ChEBI" id="CHEBI:456216"/>
        <dbReference type="EC" id="2.7.4.9"/>
    </reaction>
</comment>
<comment type="similarity">
    <text evidence="1">Belongs to the thymidylate kinase family.</text>
</comment>
<keyword id="KW-0067">ATP-binding</keyword>
<keyword id="KW-0418">Kinase</keyword>
<keyword id="KW-0545">Nucleotide biosynthesis</keyword>
<keyword id="KW-0547">Nucleotide-binding</keyword>
<keyword id="KW-1185">Reference proteome</keyword>
<keyword id="KW-0808">Transferase</keyword>
<evidence type="ECO:0000255" key="1">
    <source>
        <dbReference type="HAMAP-Rule" id="MF_00165"/>
    </source>
</evidence>
<protein>
    <recommendedName>
        <fullName evidence="1">Thymidylate kinase</fullName>
        <ecNumber evidence="1">2.7.4.9</ecNumber>
    </recommendedName>
    <alternativeName>
        <fullName evidence="1">dTMP kinase</fullName>
    </alternativeName>
</protein>
<reference key="1">
    <citation type="journal article" date="2003" name="Science">
        <title>Genome of Geobacter sulfurreducens: metal reduction in subsurface environments.</title>
        <authorList>
            <person name="Methe B.A."/>
            <person name="Nelson K.E."/>
            <person name="Eisen J.A."/>
            <person name="Paulsen I.T."/>
            <person name="Nelson W.C."/>
            <person name="Heidelberg J.F."/>
            <person name="Wu D."/>
            <person name="Wu M."/>
            <person name="Ward N.L."/>
            <person name="Beanan M.J."/>
            <person name="Dodson R.J."/>
            <person name="Madupu R."/>
            <person name="Brinkac L.M."/>
            <person name="Daugherty S.C."/>
            <person name="DeBoy R.T."/>
            <person name="Durkin A.S."/>
            <person name="Gwinn M.L."/>
            <person name="Kolonay J.F."/>
            <person name="Sullivan S.A."/>
            <person name="Haft D.H."/>
            <person name="Selengut J."/>
            <person name="Davidsen T.M."/>
            <person name="Zafar N."/>
            <person name="White O."/>
            <person name="Tran B."/>
            <person name="Romero C."/>
            <person name="Forberger H.A."/>
            <person name="Weidman J.F."/>
            <person name="Khouri H.M."/>
            <person name="Feldblyum T.V."/>
            <person name="Utterback T.R."/>
            <person name="Van Aken S.E."/>
            <person name="Lovley D.R."/>
            <person name="Fraser C.M."/>
        </authorList>
    </citation>
    <scope>NUCLEOTIDE SEQUENCE [LARGE SCALE GENOMIC DNA]</scope>
    <source>
        <strain>ATCC 51573 / DSM 12127 / PCA</strain>
    </source>
</reference>